<proteinExistence type="inferred from homology"/>
<name>NADK_SHIB3</name>
<protein>
    <recommendedName>
        <fullName evidence="1">NAD kinase</fullName>
        <ecNumber evidence="1">2.7.1.23</ecNumber>
    </recommendedName>
    <alternativeName>
        <fullName evidence="1">ATP-dependent NAD kinase</fullName>
    </alternativeName>
</protein>
<gene>
    <name evidence="1" type="primary">nadK</name>
    <name type="ordered locus">SbBS512_E3004</name>
</gene>
<sequence>MNNHFKCIGIVGHPRHPTALTTHEMLYRWLCTKGYEVIVEQQIAHELQLKNVKTGTLAEIGQLADLAVVVGGDGNMLGAARTLARYDIKVIGINRGNLGFLTDLDPDNAQQQLADVLEGHYISEKRFLLEAQVCQQDCQKRISTAINEVVLHPGKVAHMIEFEVYIDEIFAFSQRSDGLIISTPTGSTAYSLSAGGPILTPSLDAITLVPMFPHTLSARPLVINSSSTIRLRFSHRRNDLEISCDSQIALPIQEGEDVLIRRCDYHLNLIHPKDYSYFNTLSTKLGWSKKLF</sequence>
<feature type="chain" id="PRO_1000120889" description="NAD kinase">
    <location>
        <begin position="1"/>
        <end position="292"/>
    </location>
</feature>
<feature type="active site" description="Proton acceptor" evidence="1">
    <location>
        <position position="73"/>
    </location>
</feature>
<feature type="binding site" evidence="1">
    <location>
        <begin position="73"/>
        <end position="74"/>
    </location>
    <ligand>
        <name>NAD(+)</name>
        <dbReference type="ChEBI" id="CHEBI:57540"/>
    </ligand>
</feature>
<feature type="binding site" evidence="1">
    <location>
        <begin position="147"/>
        <end position="148"/>
    </location>
    <ligand>
        <name>NAD(+)</name>
        <dbReference type="ChEBI" id="CHEBI:57540"/>
    </ligand>
</feature>
<feature type="binding site" evidence="1">
    <location>
        <position position="158"/>
    </location>
    <ligand>
        <name>NAD(+)</name>
        <dbReference type="ChEBI" id="CHEBI:57540"/>
    </ligand>
</feature>
<feature type="binding site" evidence="1">
    <location>
        <position position="175"/>
    </location>
    <ligand>
        <name>NAD(+)</name>
        <dbReference type="ChEBI" id="CHEBI:57540"/>
    </ligand>
</feature>
<feature type="binding site" evidence="1">
    <location>
        <position position="177"/>
    </location>
    <ligand>
        <name>NAD(+)</name>
        <dbReference type="ChEBI" id="CHEBI:57540"/>
    </ligand>
</feature>
<feature type="binding site" evidence="1">
    <location>
        <begin position="188"/>
        <end position="193"/>
    </location>
    <ligand>
        <name>NAD(+)</name>
        <dbReference type="ChEBI" id="CHEBI:57540"/>
    </ligand>
</feature>
<feature type="binding site" evidence="1">
    <location>
        <position position="247"/>
    </location>
    <ligand>
        <name>NAD(+)</name>
        <dbReference type="ChEBI" id="CHEBI:57540"/>
    </ligand>
</feature>
<dbReference type="EC" id="2.7.1.23" evidence="1"/>
<dbReference type="EMBL" id="CP001063">
    <property type="protein sequence ID" value="ACD08665.1"/>
    <property type="molecule type" value="Genomic_DNA"/>
</dbReference>
<dbReference type="RefSeq" id="WP_001059169.1">
    <property type="nucleotide sequence ID" value="NC_010658.1"/>
</dbReference>
<dbReference type="SMR" id="B2TYN7"/>
<dbReference type="STRING" id="344609.SbBS512_E3004"/>
<dbReference type="GeneID" id="93774464"/>
<dbReference type="KEGG" id="sbc:SbBS512_E3004"/>
<dbReference type="HOGENOM" id="CLU_008831_0_1_6"/>
<dbReference type="Proteomes" id="UP000001030">
    <property type="component" value="Chromosome"/>
</dbReference>
<dbReference type="GO" id="GO:0005737">
    <property type="term" value="C:cytoplasm"/>
    <property type="evidence" value="ECO:0007669"/>
    <property type="project" value="UniProtKB-SubCell"/>
</dbReference>
<dbReference type="GO" id="GO:0005524">
    <property type="term" value="F:ATP binding"/>
    <property type="evidence" value="ECO:0007669"/>
    <property type="project" value="UniProtKB-KW"/>
</dbReference>
<dbReference type="GO" id="GO:0046872">
    <property type="term" value="F:metal ion binding"/>
    <property type="evidence" value="ECO:0007669"/>
    <property type="project" value="UniProtKB-UniRule"/>
</dbReference>
<dbReference type="GO" id="GO:0051287">
    <property type="term" value="F:NAD binding"/>
    <property type="evidence" value="ECO:0007669"/>
    <property type="project" value="UniProtKB-ARBA"/>
</dbReference>
<dbReference type="GO" id="GO:0003951">
    <property type="term" value="F:NAD+ kinase activity"/>
    <property type="evidence" value="ECO:0007669"/>
    <property type="project" value="UniProtKB-UniRule"/>
</dbReference>
<dbReference type="GO" id="GO:0019674">
    <property type="term" value="P:NAD metabolic process"/>
    <property type="evidence" value="ECO:0007669"/>
    <property type="project" value="InterPro"/>
</dbReference>
<dbReference type="GO" id="GO:0006741">
    <property type="term" value="P:NADP biosynthetic process"/>
    <property type="evidence" value="ECO:0007669"/>
    <property type="project" value="UniProtKB-UniRule"/>
</dbReference>
<dbReference type="FunFam" id="2.60.200.30:FF:000001">
    <property type="entry name" value="NAD kinase"/>
    <property type="match status" value="1"/>
</dbReference>
<dbReference type="FunFam" id="3.40.50.10330:FF:000004">
    <property type="entry name" value="NAD kinase"/>
    <property type="match status" value="1"/>
</dbReference>
<dbReference type="Gene3D" id="3.40.50.10330">
    <property type="entry name" value="Probable inorganic polyphosphate/atp-NAD kinase, domain 1"/>
    <property type="match status" value="1"/>
</dbReference>
<dbReference type="Gene3D" id="2.60.200.30">
    <property type="entry name" value="Probable inorganic polyphosphate/atp-NAD kinase, domain 2"/>
    <property type="match status" value="1"/>
</dbReference>
<dbReference type="HAMAP" id="MF_00361">
    <property type="entry name" value="NAD_kinase"/>
    <property type="match status" value="1"/>
</dbReference>
<dbReference type="InterPro" id="IPR017438">
    <property type="entry name" value="ATP-NAD_kinase_N"/>
</dbReference>
<dbReference type="InterPro" id="IPR017437">
    <property type="entry name" value="ATP-NAD_kinase_PpnK-typ_C"/>
</dbReference>
<dbReference type="InterPro" id="IPR016064">
    <property type="entry name" value="NAD/diacylglycerol_kinase_sf"/>
</dbReference>
<dbReference type="InterPro" id="IPR002504">
    <property type="entry name" value="NADK"/>
</dbReference>
<dbReference type="NCBIfam" id="NF002306">
    <property type="entry name" value="PRK01231.1"/>
    <property type="match status" value="1"/>
</dbReference>
<dbReference type="NCBIfam" id="NF002893">
    <property type="entry name" value="PRK03378.1"/>
    <property type="match status" value="1"/>
</dbReference>
<dbReference type="PANTHER" id="PTHR20275">
    <property type="entry name" value="NAD KINASE"/>
    <property type="match status" value="1"/>
</dbReference>
<dbReference type="PANTHER" id="PTHR20275:SF0">
    <property type="entry name" value="NAD KINASE"/>
    <property type="match status" value="1"/>
</dbReference>
<dbReference type="Pfam" id="PF01513">
    <property type="entry name" value="NAD_kinase"/>
    <property type="match status" value="1"/>
</dbReference>
<dbReference type="Pfam" id="PF20143">
    <property type="entry name" value="NAD_kinase_C"/>
    <property type="match status" value="1"/>
</dbReference>
<dbReference type="SUPFAM" id="SSF111331">
    <property type="entry name" value="NAD kinase/diacylglycerol kinase-like"/>
    <property type="match status" value="1"/>
</dbReference>
<organism>
    <name type="scientific">Shigella boydii serotype 18 (strain CDC 3083-94 / BS512)</name>
    <dbReference type="NCBI Taxonomy" id="344609"/>
    <lineage>
        <taxon>Bacteria</taxon>
        <taxon>Pseudomonadati</taxon>
        <taxon>Pseudomonadota</taxon>
        <taxon>Gammaproteobacteria</taxon>
        <taxon>Enterobacterales</taxon>
        <taxon>Enterobacteriaceae</taxon>
        <taxon>Shigella</taxon>
    </lineage>
</organism>
<evidence type="ECO:0000255" key="1">
    <source>
        <dbReference type="HAMAP-Rule" id="MF_00361"/>
    </source>
</evidence>
<reference key="1">
    <citation type="submission" date="2008-05" db="EMBL/GenBank/DDBJ databases">
        <title>Complete sequence of Shigella boydii serotype 18 strain BS512.</title>
        <authorList>
            <person name="Rasko D.A."/>
            <person name="Rosovitz M."/>
            <person name="Maurelli A.T."/>
            <person name="Myers G."/>
            <person name="Seshadri R."/>
            <person name="Cer R."/>
            <person name="Jiang L."/>
            <person name="Ravel J."/>
            <person name="Sebastian Y."/>
        </authorList>
    </citation>
    <scope>NUCLEOTIDE SEQUENCE [LARGE SCALE GENOMIC DNA]</scope>
    <source>
        <strain>CDC 3083-94 / BS512</strain>
    </source>
</reference>
<accession>B2TYN7</accession>
<keyword id="KW-0067">ATP-binding</keyword>
<keyword id="KW-0963">Cytoplasm</keyword>
<keyword id="KW-0418">Kinase</keyword>
<keyword id="KW-0520">NAD</keyword>
<keyword id="KW-0521">NADP</keyword>
<keyword id="KW-0547">Nucleotide-binding</keyword>
<keyword id="KW-1185">Reference proteome</keyword>
<keyword id="KW-0808">Transferase</keyword>
<comment type="function">
    <text evidence="1">Involved in the regulation of the intracellular balance of NAD and NADP, and is a key enzyme in the biosynthesis of NADP. Catalyzes specifically the phosphorylation on 2'-hydroxyl of the adenosine moiety of NAD to yield NADP.</text>
</comment>
<comment type="catalytic activity">
    <reaction evidence="1">
        <text>NAD(+) + ATP = ADP + NADP(+) + H(+)</text>
        <dbReference type="Rhea" id="RHEA:18629"/>
        <dbReference type="ChEBI" id="CHEBI:15378"/>
        <dbReference type="ChEBI" id="CHEBI:30616"/>
        <dbReference type="ChEBI" id="CHEBI:57540"/>
        <dbReference type="ChEBI" id="CHEBI:58349"/>
        <dbReference type="ChEBI" id="CHEBI:456216"/>
        <dbReference type="EC" id="2.7.1.23"/>
    </reaction>
</comment>
<comment type="cofactor">
    <cofactor evidence="1">
        <name>a divalent metal cation</name>
        <dbReference type="ChEBI" id="CHEBI:60240"/>
    </cofactor>
</comment>
<comment type="subcellular location">
    <subcellularLocation>
        <location evidence="1">Cytoplasm</location>
    </subcellularLocation>
</comment>
<comment type="similarity">
    <text evidence="1">Belongs to the NAD kinase family.</text>
</comment>